<evidence type="ECO:0000255" key="1">
    <source>
        <dbReference type="HAMAP-Rule" id="MF_01208"/>
    </source>
</evidence>
<keyword id="KW-0328">Glycosyltransferase</keyword>
<keyword id="KW-0460">Magnesium</keyword>
<keyword id="KW-0665">Pyrimidine biosynthesis</keyword>
<keyword id="KW-0808">Transferase</keyword>
<name>PYRE_CHLP8</name>
<organism>
    <name type="scientific">Chlorobaculum parvum (strain DSM 263 / NCIMB 8327)</name>
    <name type="common">Chlorobium vibrioforme subsp. thiosulfatophilum</name>
    <dbReference type="NCBI Taxonomy" id="517417"/>
    <lineage>
        <taxon>Bacteria</taxon>
        <taxon>Pseudomonadati</taxon>
        <taxon>Chlorobiota</taxon>
        <taxon>Chlorobiia</taxon>
        <taxon>Chlorobiales</taxon>
        <taxon>Chlorobiaceae</taxon>
        <taxon>Chlorobaculum</taxon>
    </lineage>
</organism>
<comment type="function">
    <text evidence="1">Catalyzes the transfer of a ribosyl phosphate group from 5-phosphoribose 1-diphosphate to orotate, leading to the formation of orotidine monophosphate (OMP).</text>
</comment>
<comment type="catalytic activity">
    <reaction evidence="1">
        <text>orotidine 5'-phosphate + diphosphate = orotate + 5-phospho-alpha-D-ribose 1-diphosphate</text>
        <dbReference type="Rhea" id="RHEA:10380"/>
        <dbReference type="ChEBI" id="CHEBI:30839"/>
        <dbReference type="ChEBI" id="CHEBI:33019"/>
        <dbReference type="ChEBI" id="CHEBI:57538"/>
        <dbReference type="ChEBI" id="CHEBI:58017"/>
        <dbReference type="EC" id="2.4.2.10"/>
    </reaction>
</comment>
<comment type="cofactor">
    <cofactor evidence="1">
        <name>Mg(2+)</name>
        <dbReference type="ChEBI" id="CHEBI:18420"/>
    </cofactor>
</comment>
<comment type="pathway">
    <text evidence="1">Pyrimidine metabolism; UMP biosynthesis via de novo pathway; UMP from orotate: step 1/2.</text>
</comment>
<comment type="subunit">
    <text evidence="1">Homodimer.</text>
</comment>
<comment type="similarity">
    <text evidence="1">Belongs to the purine/pyrimidine phosphoribosyltransferase family. PyrE subfamily.</text>
</comment>
<sequence>MTNSETLAMFKSSGALLDGHFKLTSGRHSNSYFQCAKVLQYPEYLSAICGEIAAHFRDSGITTVISPAIGGIVVGTEVGRQLGVKTIFAERKEGTMMIRRGFSIDPSEQVLVVEDVITTGGSVVEVMEQVKAAGATVAGVASVVDRSNGKVKLADKQFSLLMMEVVSYAPEECPLCKEGLPIDAPGSRSNAQG</sequence>
<dbReference type="EC" id="2.4.2.10" evidence="1"/>
<dbReference type="EMBL" id="CP001099">
    <property type="protein sequence ID" value="ACF12380.1"/>
    <property type="molecule type" value="Genomic_DNA"/>
</dbReference>
<dbReference type="RefSeq" id="WP_012503213.1">
    <property type="nucleotide sequence ID" value="NC_011027.1"/>
</dbReference>
<dbReference type="SMR" id="B3QLE2"/>
<dbReference type="STRING" id="517417.Cpar_1991"/>
<dbReference type="KEGG" id="cpc:Cpar_1991"/>
<dbReference type="eggNOG" id="COG0461">
    <property type="taxonomic scope" value="Bacteria"/>
</dbReference>
<dbReference type="HOGENOM" id="CLU_074878_3_0_10"/>
<dbReference type="OrthoDB" id="9783570at2"/>
<dbReference type="UniPathway" id="UPA00070">
    <property type="reaction ID" value="UER00119"/>
</dbReference>
<dbReference type="Proteomes" id="UP000008811">
    <property type="component" value="Chromosome"/>
</dbReference>
<dbReference type="GO" id="GO:0000287">
    <property type="term" value="F:magnesium ion binding"/>
    <property type="evidence" value="ECO:0007669"/>
    <property type="project" value="UniProtKB-UniRule"/>
</dbReference>
<dbReference type="GO" id="GO:0004588">
    <property type="term" value="F:orotate phosphoribosyltransferase activity"/>
    <property type="evidence" value="ECO:0007669"/>
    <property type="project" value="UniProtKB-UniRule"/>
</dbReference>
<dbReference type="GO" id="GO:0044205">
    <property type="term" value="P:'de novo' UMP biosynthetic process"/>
    <property type="evidence" value="ECO:0007669"/>
    <property type="project" value="UniProtKB-UniRule"/>
</dbReference>
<dbReference type="GO" id="GO:0019856">
    <property type="term" value="P:pyrimidine nucleobase biosynthetic process"/>
    <property type="evidence" value="ECO:0007669"/>
    <property type="project" value="InterPro"/>
</dbReference>
<dbReference type="CDD" id="cd06223">
    <property type="entry name" value="PRTases_typeI"/>
    <property type="match status" value="1"/>
</dbReference>
<dbReference type="Gene3D" id="3.40.50.2020">
    <property type="match status" value="1"/>
</dbReference>
<dbReference type="HAMAP" id="MF_01208">
    <property type="entry name" value="PyrE"/>
    <property type="match status" value="1"/>
</dbReference>
<dbReference type="InterPro" id="IPR023031">
    <property type="entry name" value="OPRT"/>
</dbReference>
<dbReference type="InterPro" id="IPR006273">
    <property type="entry name" value="Orotate_PRibTrfase_bac"/>
</dbReference>
<dbReference type="InterPro" id="IPR000836">
    <property type="entry name" value="PRibTrfase_dom"/>
</dbReference>
<dbReference type="InterPro" id="IPR029057">
    <property type="entry name" value="PRTase-like"/>
</dbReference>
<dbReference type="NCBIfam" id="TIGR01367">
    <property type="entry name" value="pyrE_Therm"/>
    <property type="match status" value="1"/>
</dbReference>
<dbReference type="PANTHER" id="PTHR19278">
    <property type="entry name" value="OROTATE PHOSPHORIBOSYLTRANSFERASE"/>
    <property type="match status" value="1"/>
</dbReference>
<dbReference type="PANTHER" id="PTHR19278:SF9">
    <property type="entry name" value="URIDINE 5'-MONOPHOSPHATE SYNTHASE"/>
    <property type="match status" value="1"/>
</dbReference>
<dbReference type="Pfam" id="PF00156">
    <property type="entry name" value="Pribosyltran"/>
    <property type="match status" value="1"/>
</dbReference>
<dbReference type="SUPFAM" id="SSF53271">
    <property type="entry name" value="PRTase-like"/>
    <property type="match status" value="1"/>
</dbReference>
<dbReference type="PROSITE" id="PS00103">
    <property type="entry name" value="PUR_PYR_PR_TRANSFER"/>
    <property type="match status" value="1"/>
</dbReference>
<proteinExistence type="inferred from homology"/>
<feature type="chain" id="PRO_1000138771" description="Orotate phosphoribosyltransferase">
    <location>
        <begin position="1"/>
        <end position="193"/>
    </location>
</feature>
<feature type="binding site" evidence="1">
    <location>
        <begin position="114"/>
        <end position="122"/>
    </location>
    <ligand>
        <name>5-phospho-alpha-D-ribose 1-diphosphate</name>
        <dbReference type="ChEBI" id="CHEBI:58017"/>
    </ligand>
</feature>
<feature type="binding site" evidence="1">
    <location>
        <position position="118"/>
    </location>
    <ligand>
        <name>orotate</name>
        <dbReference type="ChEBI" id="CHEBI:30839"/>
    </ligand>
</feature>
<feature type="binding site" evidence="1">
    <location>
        <position position="146"/>
    </location>
    <ligand>
        <name>orotate</name>
        <dbReference type="ChEBI" id="CHEBI:30839"/>
    </ligand>
</feature>
<gene>
    <name evidence="1" type="primary">pyrE</name>
    <name type="ordered locus">Cpar_1991</name>
</gene>
<protein>
    <recommendedName>
        <fullName evidence="1">Orotate phosphoribosyltransferase</fullName>
        <shortName evidence="1">OPRT</shortName>
        <shortName evidence="1">OPRTase</shortName>
        <ecNumber evidence="1">2.4.2.10</ecNumber>
    </recommendedName>
</protein>
<reference key="1">
    <citation type="submission" date="2008-06" db="EMBL/GenBank/DDBJ databases">
        <title>Complete sequence of Chlorobaculum parvum NCIB 8327.</title>
        <authorList>
            <consortium name="US DOE Joint Genome Institute"/>
            <person name="Lucas S."/>
            <person name="Copeland A."/>
            <person name="Lapidus A."/>
            <person name="Glavina del Rio T."/>
            <person name="Dalin E."/>
            <person name="Tice H."/>
            <person name="Bruce D."/>
            <person name="Goodwin L."/>
            <person name="Pitluck S."/>
            <person name="Schmutz J."/>
            <person name="Larimer F."/>
            <person name="Land M."/>
            <person name="Hauser L."/>
            <person name="Kyrpides N."/>
            <person name="Mikhailova N."/>
            <person name="Zhao F."/>
            <person name="Li T."/>
            <person name="Liu Z."/>
            <person name="Overmann J."/>
            <person name="Bryant D.A."/>
            <person name="Richardson P."/>
        </authorList>
    </citation>
    <scope>NUCLEOTIDE SEQUENCE [LARGE SCALE GENOMIC DNA]</scope>
    <source>
        <strain>DSM 263 / NCIMB 8327</strain>
    </source>
</reference>
<accession>B3QLE2</accession>